<feature type="chain" id="PRO_0000209958" description="Peptidase E">
    <location>
        <begin position="1"/>
        <end position="218"/>
    </location>
</feature>
<feature type="active site" description="Charge relay system" evidence="1">
    <location>
        <position position="123"/>
    </location>
</feature>
<feature type="active site" description="Charge relay system" evidence="1">
    <location>
        <position position="138"/>
    </location>
</feature>
<feature type="active site" description="Charge relay system" evidence="1">
    <location>
        <position position="160"/>
    </location>
</feature>
<reference key="1">
    <citation type="journal article" date="1995" name="Science">
        <title>Whole-genome random sequencing and assembly of Haemophilus influenzae Rd.</title>
        <authorList>
            <person name="Fleischmann R.D."/>
            <person name="Adams M.D."/>
            <person name="White O."/>
            <person name="Clayton R.A."/>
            <person name="Kirkness E.F."/>
            <person name="Kerlavage A.R."/>
            <person name="Bult C.J."/>
            <person name="Tomb J.-F."/>
            <person name="Dougherty B.A."/>
            <person name="Merrick J.M."/>
            <person name="McKenney K."/>
            <person name="Sutton G.G."/>
            <person name="FitzHugh W."/>
            <person name="Fields C.A."/>
            <person name="Gocayne J.D."/>
            <person name="Scott J.D."/>
            <person name="Shirley R."/>
            <person name="Liu L.-I."/>
            <person name="Glodek A."/>
            <person name="Kelley J.M."/>
            <person name="Weidman J.F."/>
            <person name="Phillips C.A."/>
            <person name="Spriggs T."/>
            <person name="Hedblom E."/>
            <person name="Cotton M.D."/>
            <person name="Utterback T.R."/>
            <person name="Hanna M.C."/>
            <person name="Nguyen D.T."/>
            <person name="Saudek D.M."/>
            <person name="Brandon R.C."/>
            <person name="Fine L.D."/>
            <person name="Fritchman J.L."/>
            <person name="Fuhrmann J.L."/>
            <person name="Geoghagen N.S.M."/>
            <person name="Gnehm C.L."/>
            <person name="McDonald L.A."/>
            <person name="Small K.V."/>
            <person name="Fraser C.M."/>
            <person name="Smith H.O."/>
            <person name="Venter J.C."/>
        </authorList>
    </citation>
    <scope>NUCLEOTIDE SEQUENCE [LARGE SCALE GENOMIC DNA]</scope>
    <source>
        <strain>ATCC 51907 / DSM 11121 / KW20 / Rd</strain>
    </source>
</reference>
<keyword id="KW-0963">Cytoplasm</keyword>
<keyword id="KW-0224">Dipeptidase</keyword>
<keyword id="KW-0378">Hydrolase</keyword>
<keyword id="KW-0645">Protease</keyword>
<keyword id="KW-1185">Reference proteome</keyword>
<keyword id="KW-0720">Serine protease</keyword>
<sequence length="218" mass="24420">MKNMLLLSSSKYKNTGYLEHTIPWLQNFLADYRGKTIAFVPYAGVSRTFDEYEKTVQNALSDLGMNIVSVHRGKQHRDIIEQADVIAIGGGNTFCLLKQLYEHNLIDIIREKVNNGTPYFGWSAGANVAGSSIMTTNDMPITYPPSFQALQLFPHQINPHFISGKMQGHNGESREERLAEFLLVNPTALVYALPEGSALHIQNGMGNRIGRKSYFVLQ</sequence>
<dbReference type="EC" id="3.4.13.21" evidence="1"/>
<dbReference type="EMBL" id="L42023">
    <property type="protein sequence ID" value="AAC22244.1"/>
    <property type="molecule type" value="Genomic_DNA"/>
</dbReference>
<dbReference type="PIR" id="C64079">
    <property type="entry name" value="C64079"/>
</dbReference>
<dbReference type="RefSeq" id="NP_438745.2">
    <property type="nucleotide sequence ID" value="NC_000907.1"/>
</dbReference>
<dbReference type="SMR" id="P44766"/>
<dbReference type="STRING" id="71421.HI_0587"/>
<dbReference type="MEROPS" id="S51.001"/>
<dbReference type="EnsemblBacteria" id="AAC22244">
    <property type="protein sequence ID" value="AAC22244"/>
    <property type="gene ID" value="HI_0587"/>
</dbReference>
<dbReference type="KEGG" id="hin:HI_0587"/>
<dbReference type="PATRIC" id="fig|71421.8.peg.608"/>
<dbReference type="eggNOG" id="COG3340">
    <property type="taxonomic scope" value="Bacteria"/>
</dbReference>
<dbReference type="HOGENOM" id="CLU_071689_0_0_6"/>
<dbReference type="OrthoDB" id="3373764at2"/>
<dbReference type="PhylomeDB" id="P44766"/>
<dbReference type="BioCyc" id="HINF71421:G1GJ1-599-MONOMER"/>
<dbReference type="Proteomes" id="UP000000579">
    <property type="component" value="Chromosome"/>
</dbReference>
<dbReference type="GO" id="GO:0005737">
    <property type="term" value="C:cytoplasm"/>
    <property type="evidence" value="ECO:0007669"/>
    <property type="project" value="UniProtKB-SubCell"/>
</dbReference>
<dbReference type="GO" id="GO:0016805">
    <property type="term" value="F:dipeptidase activity"/>
    <property type="evidence" value="ECO:0007669"/>
    <property type="project" value="UniProtKB-UniRule"/>
</dbReference>
<dbReference type="GO" id="GO:0008236">
    <property type="term" value="F:serine-type peptidase activity"/>
    <property type="evidence" value="ECO:0007669"/>
    <property type="project" value="UniProtKB-KW"/>
</dbReference>
<dbReference type="GO" id="GO:0006508">
    <property type="term" value="P:proteolysis"/>
    <property type="evidence" value="ECO:0007669"/>
    <property type="project" value="UniProtKB-UniRule"/>
</dbReference>
<dbReference type="CDD" id="cd03146">
    <property type="entry name" value="GAT1_Peptidase_E"/>
    <property type="match status" value="1"/>
</dbReference>
<dbReference type="FunFam" id="3.40.50.880:FF:000007">
    <property type="entry name" value="Peptidase E"/>
    <property type="match status" value="1"/>
</dbReference>
<dbReference type="Gene3D" id="3.40.50.880">
    <property type="match status" value="1"/>
</dbReference>
<dbReference type="HAMAP" id="MF_00510">
    <property type="entry name" value="Peptidase_E"/>
    <property type="match status" value="1"/>
</dbReference>
<dbReference type="InterPro" id="IPR029062">
    <property type="entry name" value="Class_I_gatase-like"/>
</dbReference>
<dbReference type="InterPro" id="IPR005320">
    <property type="entry name" value="Peptidase_S51"/>
</dbReference>
<dbReference type="InterPro" id="IPR023172">
    <property type="entry name" value="Peptidase_S51_dipeptidase-E"/>
</dbReference>
<dbReference type="NCBIfam" id="NF003642">
    <property type="entry name" value="PRK05282.1"/>
    <property type="match status" value="1"/>
</dbReference>
<dbReference type="PANTHER" id="PTHR20842:SF0">
    <property type="entry name" value="ALPHA-ASPARTYL DIPEPTIDASE"/>
    <property type="match status" value="1"/>
</dbReference>
<dbReference type="PANTHER" id="PTHR20842">
    <property type="entry name" value="PROTEASE S51 ALPHA-ASPARTYL DIPEPTIDASE"/>
    <property type="match status" value="1"/>
</dbReference>
<dbReference type="Pfam" id="PF03575">
    <property type="entry name" value="Peptidase_S51"/>
    <property type="match status" value="1"/>
</dbReference>
<dbReference type="SUPFAM" id="SSF52317">
    <property type="entry name" value="Class I glutamine amidotransferase-like"/>
    <property type="match status" value="1"/>
</dbReference>
<proteinExistence type="inferred from homology"/>
<gene>
    <name evidence="1" type="primary">pepE</name>
    <name type="ordered locus">HI_0587</name>
</gene>
<protein>
    <recommendedName>
        <fullName evidence="1">Peptidase E</fullName>
        <ecNumber evidence="1">3.4.13.21</ecNumber>
    </recommendedName>
    <alternativeName>
        <fullName evidence="1">Alpha-aspartyl dipeptidase</fullName>
    </alternativeName>
    <alternativeName>
        <fullName evidence="1">Asp-specific dipeptidase</fullName>
    </alternativeName>
    <alternativeName>
        <fullName evidence="1">Dipeptidase E</fullName>
    </alternativeName>
</protein>
<evidence type="ECO:0000255" key="1">
    <source>
        <dbReference type="HAMAP-Rule" id="MF_00510"/>
    </source>
</evidence>
<organism>
    <name type="scientific">Haemophilus influenzae (strain ATCC 51907 / DSM 11121 / KW20 / Rd)</name>
    <dbReference type="NCBI Taxonomy" id="71421"/>
    <lineage>
        <taxon>Bacteria</taxon>
        <taxon>Pseudomonadati</taxon>
        <taxon>Pseudomonadota</taxon>
        <taxon>Gammaproteobacteria</taxon>
        <taxon>Pasteurellales</taxon>
        <taxon>Pasteurellaceae</taxon>
        <taxon>Haemophilus</taxon>
    </lineage>
</organism>
<name>PEPE_HAEIN</name>
<accession>P44766</accession>
<comment type="function">
    <text evidence="1">Hydrolyzes dipeptides containing N-terminal aspartate residues. May play a role in allowing the cell to use peptide aspartate to spare carbon otherwise required for the synthesis of the aspartate family of amino acids.</text>
</comment>
<comment type="catalytic activity">
    <reaction evidence="1">
        <text>Dipeptidase E catalyzes the hydrolysis of dipeptides Asp-|-Xaa. It does not act on peptides with N-terminal Glu, Asn or Gln, nor does it cleave isoaspartyl peptides.</text>
        <dbReference type="EC" id="3.4.13.21"/>
    </reaction>
</comment>
<comment type="subcellular location">
    <subcellularLocation>
        <location evidence="1">Cytoplasm</location>
    </subcellularLocation>
</comment>
<comment type="similarity">
    <text evidence="1">Belongs to the peptidase S51 family.</text>
</comment>